<keyword id="KW-0012">Acyltransferase</keyword>
<keyword id="KW-0067">ATP-binding</keyword>
<keyword id="KW-0997">Cell inner membrane</keyword>
<keyword id="KW-1003">Cell membrane</keyword>
<keyword id="KW-0436">Ligase</keyword>
<keyword id="KW-0472">Membrane</keyword>
<keyword id="KW-0511">Multifunctional enzyme</keyword>
<keyword id="KW-0547">Nucleotide-binding</keyword>
<keyword id="KW-0808">Transferase</keyword>
<keyword id="KW-0812">Transmembrane</keyword>
<keyword id="KW-1133">Transmembrane helix</keyword>
<proteinExistence type="inferred from homology"/>
<organism>
    <name type="scientific">Salmonella paratyphi A (strain ATCC 9150 / SARB42)</name>
    <dbReference type="NCBI Taxonomy" id="295319"/>
    <lineage>
        <taxon>Bacteria</taxon>
        <taxon>Pseudomonadati</taxon>
        <taxon>Pseudomonadota</taxon>
        <taxon>Gammaproteobacteria</taxon>
        <taxon>Enterobacterales</taxon>
        <taxon>Enterobacteriaceae</taxon>
        <taxon>Salmonella</taxon>
    </lineage>
</organism>
<comment type="function">
    <text evidence="1">Plays a role in lysophospholipid acylation. Transfers fatty acids to the 1-position via an enzyme-bound acyl-ACP intermediate in the presence of ATP and magnesium. Its physiological function is to regenerate phosphatidylethanolamine from 2-acyl-glycero-3-phosphoethanolamine (2-acyl-GPE) formed by transacylation reactions or degradation by phospholipase A1.</text>
</comment>
<comment type="catalytic activity">
    <reaction evidence="1">
        <text>a 2-acyl-sn-glycero-3-phosphoethanolamine + a fatty acyl-[ACP] = a 1,2-diacyl-sn-glycero-3-phosphoethanolamine + holo-[ACP]</text>
        <dbReference type="Rhea" id="RHEA:10304"/>
        <dbReference type="Rhea" id="RHEA-COMP:9685"/>
        <dbReference type="Rhea" id="RHEA-COMP:14125"/>
        <dbReference type="ChEBI" id="CHEBI:64479"/>
        <dbReference type="ChEBI" id="CHEBI:64612"/>
        <dbReference type="ChEBI" id="CHEBI:65213"/>
        <dbReference type="ChEBI" id="CHEBI:138651"/>
        <dbReference type="EC" id="2.3.1.40"/>
    </reaction>
</comment>
<comment type="catalytic activity">
    <reaction evidence="1">
        <text>a long-chain fatty acid + holo-[ACP] + ATP = a long-chain fatty acyl-[ACP] + AMP + diphosphate</text>
        <dbReference type="Rhea" id="RHEA:45588"/>
        <dbReference type="Rhea" id="RHEA-COMP:9685"/>
        <dbReference type="Rhea" id="RHEA-COMP:12682"/>
        <dbReference type="ChEBI" id="CHEBI:30616"/>
        <dbReference type="ChEBI" id="CHEBI:33019"/>
        <dbReference type="ChEBI" id="CHEBI:57560"/>
        <dbReference type="ChEBI" id="CHEBI:64479"/>
        <dbReference type="ChEBI" id="CHEBI:133243"/>
        <dbReference type="ChEBI" id="CHEBI:456215"/>
        <dbReference type="EC" id="6.2.1.20"/>
    </reaction>
</comment>
<comment type="subcellular location">
    <subcellularLocation>
        <location evidence="1">Cell inner membrane</location>
        <topology evidence="1">Multi-pass membrane protein</topology>
    </subcellularLocation>
</comment>
<comment type="similarity">
    <text evidence="1">In the N-terminal section; belongs to the 2-acyl-GPE acetyltransferase family.</text>
</comment>
<comment type="similarity">
    <text evidence="1">In the C-terminal section; belongs to the ATP-dependent AMP-binding enzyme family.</text>
</comment>
<sequence length="719" mass="80511">MLFGFFRNLFRVLYRVRVTGDVRALQGNRVLITPNHVSFIDGMLLALFLPVRPVFAVYTSISQQWYMRWLTPLIDFVPLDPTKPMSIKHLMRLVEQGRPVVIFPEGRISVTGSLMKIYDGAGFVAAKSGATVIPLRIDGAELTPFSRLKGLVKRRLFPRIQLHILPPTQIPMPEAPRARDRRKIAGEMLHQIMMEARMAVRPRETLYESLLAAQYRYGAGKNCIEDINFTPDTYRKLLTKTLFVGRILEKYSVEGEKIGLMLPNAAISAAVIFGAVSRRRIPAMMNYTAGVKGLTSAIAAAEIKTIFTSRQFLDKGKLWHLPEQLTQVRWVYLEDLKADVTLADKLWIFAHLLAPRLAQVKQQPEDAAIILFTSGSEGHPKGVVHSHKSILANVEQIKTIADFTANDRFMSALPLFHSFGLTVGLFTPLLTGAEVFLYPSPLHYRIVPELVYDRNCTVLFGTSTFLGNYARFANPYDFYRLRYVVAGAEKLQESTKQLWQDKFGLRILEGYGVTECAPVVSINVPMAAKPGTVGRILPGMDARLLAVPGIENGGRLQLKGPNIMNGYLRVEKPGVLEVPSAENARGETERGWYDTGDIVRFDENGFVQIQGRAKRFAKIAGEMVSLEMVEQLALGVSADKMHATAIKSDASKGEALVLFTTDSELTREKLQHYAREHGIPELAVPRDIRYLKQLPLLGSGKPDFVTLKSWVDAPEQHHE</sequence>
<reference key="1">
    <citation type="journal article" date="2004" name="Nat. Genet.">
        <title>Comparison of genome degradation in Paratyphi A and Typhi, human-restricted serovars of Salmonella enterica that cause typhoid.</title>
        <authorList>
            <person name="McClelland M."/>
            <person name="Sanderson K.E."/>
            <person name="Clifton S.W."/>
            <person name="Latreille P."/>
            <person name="Porwollik S."/>
            <person name="Sabo A."/>
            <person name="Meyer R."/>
            <person name="Bieri T."/>
            <person name="Ozersky P."/>
            <person name="McLellan M."/>
            <person name="Harkins C.R."/>
            <person name="Wang C."/>
            <person name="Nguyen C."/>
            <person name="Berghoff A."/>
            <person name="Elliott G."/>
            <person name="Kohlberg S."/>
            <person name="Strong C."/>
            <person name="Du F."/>
            <person name="Carter J."/>
            <person name="Kremizki C."/>
            <person name="Layman D."/>
            <person name="Leonard S."/>
            <person name="Sun H."/>
            <person name="Fulton L."/>
            <person name="Nash W."/>
            <person name="Miner T."/>
            <person name="Minx P."/>
            <person name="Delehaunty K."/>
            <person name="Fronick C."/>
            <person name="Magrini V."/>
            <person name="Nhan M."/>
            <person name="Warren W."/>
            <person name="Florea L."/>
            <person name="Spieth J."/>
            <person name="Wilson R.K."/>
        </authorList>
    </citation>
    <scope>NUCLEOTIDE SEQUENCE [LARGE SCALE GENOMIC DNA]</scope>
    <source>
        <strain>ATCC 9150 / SARB42</strain>
    </source>
</reference>
<dbReference type="EC" id="2.3.1.40" evidence="1"/>
<dbReference type="EC" id="6.2.1.20" evidence="1"/>
<dbReference type="EMBL" id="CP000026">
    <property type="protein sequence ID" value="AAV78720.1"/>
    <property type="molecule type" value="Genomic_DNA"/>
</dbReference>
<dbReference type="RefSeq" id="WP_000896086.1">
    <property type="nucleotide sequence ID" value="NC_006511.1"/>
</dbReference>
<dbReference type="SMR" id="Q5PEN7"/>
<dbReference type="KEGG" id="spt:SPA2875"/>
<dbReference type="HOGENOM" id="CLU_000022_59_8_6"/>
<dbReference type="Proteomes" id="UP000008185">
    <property type="component" value="Chromosome"/>
</dbReference>
<dbReference type="GO" id="GO:0005886">
    <property type="term" value="C:plasma membrane"/>
    <property type="evidence" value="ECO:0007669"/>
    <property type="project" value="UniProtKB-SubCell"/>
</dbReference>
<dbReference type="GO" id="GO:0008779">
    <property type="term" value="F:acyl-[acyl-carrier-protein]-phospholipid O-acyltransferase activity"/>
    <property type="evidence" value="ECO:0007669"/>
    <property type="project" value="UniProtKB-UniRule"/>
</dbReference>
<dbReference type="GO" id="GO:0005524">
    <property type="term" value="F:ATP binding"/>
    <property type="evidence" value="ECO:0007669"/>
    <property type="project" value="UniProtKB-KW"/>
</dbReference>
<dbReference type="GO" id="GO:0008922">
    <property type="term" value="F:long-chain fatty acid [acyl-carrier-protein] ligase activity"/>
    <property type="evidence" value="ECO:0007669"/>
    <property type="project" value="UniProtKB-UniRule"/>
</dbReference>
<dbReference type="GO" id="GO:0031956">
    <property type="term" value="F:medium-chain fatty acid-CoA ligase activity"/>
    <property type="evidence" value="ECO:0007669"/>
    <property type="project" value="TreeGrafter"/>
</dbReference>
<dbReference type="GO" id="GO:0006631">
    <property type="term" value="P:fatty acid metabolic process"/>
    <property type="evidence" value="ECO:0007669"/>
    <property type="project" value="InterPro"/>
</dbReference>
<dbReference type="GO" id="GO:0008654">
    <property type="term" value="P:phospholipid biosynthetic process"/>
    <property type="evidence" value="ECO:0007669"/>
    <property type="project" value="InterPro"/>
</dbReference>
<dbReference type="CDD" id="cd05909">
    <property type="entry name" value="AAS_C"/>
    <property type="match status" value="1"/>
</dbReference>
<dbReference type="CDD" id="cd07989">
    <property type="entry name" value="LPLAT_AGPAT-like"/>
    <property type="match status" value="1"/>
</dbReference>
<dbReference type="FunFam" id="3.30.300.30:FF:000009">
    <property type="entry name" value="Bifunctional protein Aas"/>
    <property type="match status" value="1"/>
</dbReference>
<dbReference type="FunFam" id="3.40.50.12780:FF:000009">
    <property type="entry name" value="Bifunctional protein Aas"/>
    <property type="match status" value="1"/>
</dbReference>
<dbReference type="Gene3D" id="3.30.300.30">
    <property type="match status" value="1"/>
</dbReference>
<dbReference type="Gene3D" id="3.40.50.12780">
    <property type="entry name" value="N-terminal domain of ligase-like"/>
    <property type="match status" value="1"/>
</dbReference>
<dbReference type="HAMAP" id="MF_01162">
    <property type="entry name" value="Aas"/>
    <property type="match status" value="1"/>
</dbReference>
<dbReference type="InterPro" id="IPR023775">
    <property type="entry name" value="Aas"/>
</dbReference>
<dbReference type="InterPro" id="IPR045851">
    <property type="entry name" value="AMP-bd_C_sf"/>
</dbReference>
<dbReference type="InterPro" id="IPR020845">
    <property type="entry name" value="AMP-binding_CS"/>
</dbReference>
<dbReference type="InterPro" id="IPR000873">
    <property type="entry name" value="AMP-dep_synth/lig_dom"/>
</dbReference>
<dbReference type="InterPro" id="IPR042099">
    <property type="entry name" value="ANL_N_sf"/>
</dbReference>
<dbReference type="InterPro" id="IPR002123">
    <property type="entry name" value="Plipid/glycerol_acylTrfase"/>
</dbReference>
<dbReference type="NCBIfam" id="NF005959">
    <property type="entry name" value="PRK08043.1"/>
    <property type="match status" value="1"/>
</dbReference>
<dbReference type="PANTHER" id="PTHR43201">
    <property type="entry name" value="ACYL-COA SYNTHETASE"/>
    <property type="match status" value="1"/>
</dbReference>
<dbReference type="PANTHER" id="PTHR43201:SF8">
    <property type="entry name" value="ACYL-COA SYNTHETASE FAMILY MEMBER 3"/>
    <property type="match status" value="1"/>
</dbReference>
<dbReference type="Pfam" id="PF01553">
    <property type="entry name" value="Acyltransferase"/>
    <property type="match status" value="1"/>
</dbReference>
<dbReference type="Pfam" id="PF00501">
    <property type="entry name" value="AMP-binding"/>
    <property type="match status" value="1"/>
</dbReference>
<dbReference type="SMART" id="SM00563">
    <property type="entry name" value="PlsC"/>
    <property type="match status" value="1"/>
</dbReference>
<dbReference type="SUPFAM" id="SSF56801">
    <property type="entry name" value="Acetyl-CoA synthetase-like"/>
    <property type="match status" value="1"/>
</dbReference>
<dbReference type="SUPFAM" id="SSF69593">
    <property type="entry name" value="Glycerol-3-phosphate (1)-acyltransferase"/>
    <property type="match status" value="1"/>
</dbReference>
<dbReference type="PROSITE" id="PS00455">
    <property type="entry name" value="AMP_BINDING"/>
    <property type="match status" value="1"/>
</dbReference>
<feature type="chain" id="PRO_0000193051" description="Bifunctional protein Aas">
    <location>
        <begin position="1"/>
        <end position="719"/>
    </location>
</feature>
<feature type="transmembrane region" description="Helical" evidence="1">
    <location>
        <begin position="258"/>
        <end position="277"/>
    </location>
</feature>
<feature type="transmembrane region" description="Helical" evidence="1">
    <location>
        <begin position="409"/>
        <end position="433"/>
    </location>
</feature>
<feature type="region of interest" description="Acyltransferase">
    <location>
        <begin position="15"/>
        <end position="138"/>
    </location>
</feature>
<feature type="region of interest" description="AMP-binding">
    <location>
        <begin position="233"/>
        <end position="646"/>
    </location>
</feature>
<feature type="active site" evidence="1">
    <location>
        <position position="36"/>
    </location>
</feature>
<evidence type="ECO:0000255" key="1">
    <source>
        <dbReference type="HAMAP-Rule" id="MF_01162"/>
    </source>
</evidence>
<gene>
    <name evidence="1" type="primary">aas</name>
    <name type="ordered locus">SPA2875</name>
</gene>
<protein>
    <recommendedName>
        <fullName evidence="1">Bifunctional protein Aas</fullName>
    </recommendedName>
    <domain>
        <recommendedName>
            <fullName evidence="1">2-acylglycerophosphoethanolamine acyltransferase</fullName>
            <ecNumber evidence="1">2.3.1.40</ecNumber>
        </recommendedName>
        <alternativeName>
            <fullName evidence="1">2-acyl-GPE acyltransferase</fullName>
        </alternativeName>
        <alternativeName>
            <fullName evidence="1">Acyl-[acyl-carrier-protein]--phospholipid O-acyltransferase</fullName>
        </alternativeName>
    </domain>
    <domain>
        <recommendedName>
            <fullName evidence="1">Acyl-[acyl-carrier-protein] synthetase</fullName>
            <ecNumber evidence="1">6.2.1.20</ecNumber>
        </recommendedName>
        <alternativeName>
            <fullName evidence="1">Acyl-ACP synthetase</fullName>
        </alternativeName>
        <alternativeName>
            <fullName evidence="1">Long-chain-fatty-acid--[acyl-carrier-protein] ligase</fullName>
        </alternativeName>
    </domain>
</protein>
<accession>Q5PEN7</accession>
<name>AAS_SALPA</name>